<reference key="1">
    <citation type="journal article" date="2008" name="PLoS ONE">
        <title>A recalibrated molecular clock and independent origins for the cholera pandemic clones.</title>
        <authorList>
            <person name="Feng L."/>
            <person name="Reeves P.R."/>
            <person name="Lan R."/>
            <person name="Ren Y."/>
            <person name="Gao C."/>
            <person name="Zhou Z."/>
            <person name="Ren Y."/>
            <person name="Cheng J."/>
            <person name="Wang W."/>
            <person name="Wang J."/>
            <person name="Qian W."/>
            <person name="Li D."/>
            <person name="Wang L."/>
        </authorList>
    </citation>
    <scope>NUCLEOTIDE SEQUENCE [LARGE SCALE GENOMIC DNA]</scope>
    <source>
        <strain>M66-2</strain>
    </source>
</reference>
<evidence type="ECO:0000255" key="1">
    <source>
        <dbReference type="HAMAP-Rule" id="MF_00096"/>
    </source>
</evidence>
<proteinExistence type="inferred from homology"/>
<feature type="chain" id="PRO_1000118701" description="DNA mismatch repair protein MutS">
    <location>
        <begin position="1"/>
        <end position="862"/>
    </location>
</feature>
<feature type="binding site" evidence="1">
    <location>
        <begin position="621"/>
        <end position="628"/>
    </location>
    <ligand>
        <name>ATP</name>
        <dbReference type="ChEBI" id="CHEBI:30616"/>
    </ligand>
</feature>
<dbReference type="EMBL" id="CP001233">
    <property type="protein sequence ID" value="ACP04818.1"/>
    <property type="molecule type" value="Genomic_DNA"/>
</dbReference>
<dbReference type="RefSeq" id="WP_001894770.1">
    <property type="nucleotide sequence ID" value="NC_012578.1"/>
</dbReference>
<dbReference type="SMR" id="C3LS25"/>
<dbReference type="KEGG" id="vcm:VCM66_0493"/>
<dbReference type="HOGENOM" id="CLU_002472_4_0_6"/>
<dbReference type="Proteomes" id="UP000001217">
    <property type="component" value="Chromosome I"/>
</dbReference>
<dbReference type="GO" id="GO:0005829">
    <property type="term" value="C:cytosol"/>
    <property type="evidence" value="ECO:0007669"/>
    <property type="project" value="TreeGrafter"/>
</dbReference>
<dbReference type="GO" id="GO:0005524">
    <property type="term" value="F:ATP binding"/>
    <property type="evidence" value="ECO:0007669"/>
    <property type="project" value="UniProtKB-UniRule"/>
</dbReference>
<dbReference type="GO" id="GO:0140664">
    <property type="term" value="F:ATP-dependent DNA damage sensor activity"/>
    <property type="evidence" value="ECO:0007669"/>
    <property type="project" value="InterPro"/>
</dbReference>
<dbReference type="GO" id="GO:0003684">
    <property type="term" value="F:damaged DNA binding"/>
    <property type="evidence" value="ECO:0007669"/>
    <property type="project" value="UniProtKB-UniRule"/>
</dbReference>
<dbReference type="GO" id="GO:0030983">
    <property type="term" value="F:mismatched DNA binding"/>
    <property type="evidence" value="ECO:0007669"/>
    <property type="project" value="InterPro"/>
</dbReference>
<dbReference type="GO" id="GO:0006298">
    <property type="term" value="P:mismatch repair"/>
    <property type="evidence" value="ECO:0007669"/>
    <property type="project" value="UniProtKB-UniRule"/>
</dbReference>
<dbReference type="CDD" id="cd03284">
    <property type="entry name" value="ABC_MutS1"/>
    <property type="match status" value="1"/>
</dbReference>
<dbReference type="FunFam" id="1.10.1420.10:FF:000002">
    <property type="entry name" value="DNA mismatch repair protein MutS"/>
    <property type="match status" value="1"/>
</dbReference>
<dbReference type="FunFam" id="3.30.420.110:FF:000001">
    <property type="entry name" value="DNA mismatch repair protein MutS"/>
    <property type="match status" value="1"/>
</dbReference>
<dbReference type="FunFam" id="3.40.1170.10:FF:000001">
    <property type="entry name" value="DNA mismatch repair protein MutS"/>
    <property type="match status" value="1"/>
</dbReference>
<dbReference type="FunFam" id="3.40.50.300:FF:000283">
    <property type="entry name" value="DNA mismatch repair protein MutS"/>
    <property type="match status" value="1"/>
</dbReference>
<dbReference type="Gene3D" id="1.10.1420.10">
    <property type="match status" value="2"/>
</dbReference>
<dbReference type="Gene3D" id="6.10.140.430">
    <property type="match status" value="1"/>
</dbReference>
<dbReference type="Gene3D" id="3.40.1170.10">
    <property type="entry name" value="DNA repair protein MutS, domain I"/>
    <property type="match status" value="1"/>
</dbReference>
<dbReference type="Gene3D" id="3.30.420.110">
    <property type="entry name" value="MutS, connector domain"/>
    <property type="match status" value="1"/>
</dbReference>
<dbReference type="Gene3D" id="3.40.50.300">
    <property type="entry name" value="P-loop containing nucleotide triphosphate hydrolases"/>
    <property type="match status" value="1"/>
</dbReference>
<dbReference type="HAMAP" id="MF_00096">
    <property type="entry name" value="MutS"/>
    <property type="match status" value="1"/>
</dbReference>
<dbReference type="InterPro" id="IPR005748">
    <property type="entry name" value="DNA_mismatch_repair_MutS"/>
</dbReference>
<dbReference type="InterPro" id="IPR007695">
    <property type="entry name" value="DNA_mismatch_repair_MutS-lik_N"/>
</dbReference>
<dbReference type="InterPro" id="IPR017261">
    <property type="entry name" value="DNA_mismatch_repair_MutS/MSH"/>
</dbReference>
<dbReference type="InterPro" id="IPR000432">
    <property type="entry name" value="DNA_mismatch_repair_MutS_C"/>
</dbReference>
<dbReference type="InterPro" id="IPR007861">
    <property type="entry name" value="DNA_mismatch_repair_MutS_clamp"/>
</dbReference>
<dbReference type="InterPro" id="IPR007696">
    <property type="entry name" value="DNA_mismatch_repair_MutS_core"/>
</dbReference>
<dbReference type="InterPro" id="IPR016151">
    <property type="entry name" value="DNA_mismatch_repair_MutS_N"/>
</dbReference>
<dbReference type="InterPro" id="IPR036187">
    <property type="entry name" value="DNA_mismatch_repair_MutS_sf"/>
</dbReference>
<dbReference type="InterPro" id="IPR007860">
    <property type="entry name" value="DNA_mmatch_repair_MutS_con_dom"/>
</dbReference>
<dbReference type="InterPro" id="IPR045076">
    <property type="entry name" value="MutS"/>
</dbReference>
<dbReference type="InterPro" id="IPR036678">
    <property type="entry name" value="MutS_con_dom_sf"/>
</dbReference>
<dbReference type="InterPro" id="IPR027417">
    <property type="entry name" value="P-loop_NTPase"/>
</dbReference>
<dbReference type="NCBIfam" id="TIGR01070">
    <property type="entry name" value="mutS1"/>
    <property type="match status" value="1"/>
</dbReference>
<dbReference type="NCBIfam" id="NF003810">
    <property type="entry name" value="PRK05399.1"/>
    <property type="match status" value="1"/>
</dbReference>
<dbReference type="PANTHER" id="PTHR11361:SF34">
    <property type="entry name" value="DNA MISMATCH REPAIR PROTEIN MSH1, MITOCHONDRIAL"/>
    <property type="match status" value="1"/>
</dbReference>
<dbReference type="PANTHER" id="PTHR11361">
    <property type="entry name" value="DNA MISMATCH REPAIR PROTEIN MUTS FAMILY MEMBER"/>
    <property type="match status" value="1"/>
</dbReference>
<dbReference type="Pfam" id="PF01624">
    <property type="entry name" value="MutS_I"/>
    <property type="match status" value="1"/>
</dbReference>
<dbReference type="Pfam" id="PF05188">
    <property type="entry name" value="MutS_II"/>
    <property type="match status" value="1"/>
</dbReference>
<dbReference type="Pfam" id="PF05192">
    <property type="entry name" value="MutS_III"/>
    <property type="match status" value="1"/>
</dbReference>
<dbReference type="Pfam" id="PF05190">
    <property type="entry name" value="MutS_IV"/>
    <property type="match status" value="1"/>
</dbReference>
<dbReference type="Pfam" id="PF00488">
    <property type="entry name" value="MutS_V"/>
    <property type="match status" value="1"/>
</dbReference>
<dbReference type="PIRSF" id="PIRSF037677">
    <property type="entry name" value="DNA_mis_repair_Msh6"/>
    <property type="match status" value="1"/>
</dbReference>
<dbReference type="SMART" id="SM00534">
    <property type="entry name" value="MUTSac"/>
    <property type="match status" value="1"/>
</dbReference>
<dbReference type="SMART" id="SM00533">
    <property type="entry name" value="MUTSd"/>
    <property type="match status" value="1"/>
</dbReference>
<dbReference type="SUPFAM" id="SSF55271">
    <property type="entry name" value="DNA repair protein MutS, domain I"/>
    <property type="match status" value="1"/>
</dbReference>
<dbReference type="SUPFAM" id="SSF53150">
    <property type="entry name" value="DNA repair protein MutS, domain II"/>
    <property type="match status" value="1"/>
</dbReference>
<dbReference type="SUPFAM" id="SSF48334">
    <property type="entry name" value="DNA repair protein MutS, domain III"/>
    <property type="match status" value="1"/>
</dbReference>
<dbReference type="SUPFAM" id="SSF52540">
    <property type="entry name" value="P-loop containing nucleoside triphosphate hydrolases"/>
    <property type="match status" value="1"/>
</dbReference>
<dbReference type="PROSITE" id="PS00486">
    <property type="entry name" value="DNA_MISMATCH_REPAIR_2"/>
    <property type="match status" value="1"/>
</dbReference>
<protein>
    <recommendedName>
        <fullName evidence="1">DNA mismatch repair protein MutS</fullName>
    </recommendedName>
</protein>
<sequence>MMKSNASPSESLSHHTPMMQQYLRLKAENPDILLFYRMGDFYELFYDDAKRASELLDISLTKRGASAGEPIPMAGVPFHAVEGYLAKLVQMGESVAICEQIGDPATSKGPVERKVVRIVTPGTVTDEALLSERVDNLIAAIYHHNGRFGYATMDITSGRFQLSEPQTEEEMAAELQRTSPRELLFPEDFSPVHLMASRQGNRRRPIWEFELDTAKQQLNQQFGTRDLVGFGVEQAKLGLCAAGCLIQYVKDTQRTALPHIRSLTWDRQDQSVILDAATRRNLELTHNLAGGTDNTLAEVLDHCATPMGSRMLKRWIHQPMRDNATLNQRLDAITELKETALYGELHPVLKQIGDIERILARLALRSARPRDLARLRHAMQQLPELHSVMSELKQPHLTELRTHAEPMDELCDLLERAIKENPPVVIRDGGVIADGYSAELDEWRDLANGATEFLERLEAEERDRHGIDTLKVGYNNVHGFYIQVSRGQSHLVPPHYVRRQTLKNAERYIIEELKQHEDKVLNSKSRALALEKQLWEELFDLLMPHLEQLQQLAASVAQLDVLQNLAERAENLEYCRPTLVQEAGIHIQGGRHPVVERVMNEPFIANPIELNPQRRMLIITGPNMGGKSTYMRQTALIALMAHIGSYVPAESASIGPLDRIFTRIGASDDLASGRSTFMVEMTETANILHNATRNSLVLMDEIGRGTSTYDGLSLAWASAEWLAKEIGAMTLFATHYFELTELPNVLPHLANVHLDAVEHGDGIAFMHAVQEGAASKSYGLAVAGLAGVPKPVIKNARAKLQQLELLSSQPAETRKPSRVDIANQLSLIPEPSAVEQALAGVDPDQLTPRQALDMLYQLKKLL</sequence>
<organism>
    <name type="scientific">Vibrio cholerae serotype O1 (strain M66-2)</name>
    <dbReference type="NCBI Taxonomy" id="579112"/>
    <lineage>
        <taxon>Bacteria</taxon>
        <taxon>Pseudomonadati</taxon>
        <taxon>Pseudomonadota</taxon>
        <taxon>Gammaproteobacteria</taxon>
        <taxon>Vibrionales</taxon>
        <taxon>Vibrionaceae</taxon>
        <taxon>Vibrio</taxon>
    </lineage>
</organism>
<keyword id="KW-0067">ATP-binding</keyword>
<keyword id="KW-0227">DNA damage</keyword>
<keyword id="KW-0234">DNA repair</keyword>
<keyword id="KW-0238">DNA-binding</keyword>
<keyword id="KW-0547">Nucleotide-binding</keyword>
<name>MUTS_VIBCM</name>
<gene>
    <name evidence="1" type="primary">mutS</name>
    <name type="ordered locus">VCM66_0493</name>
</gene>
<comment type="function">
    <text evidence="1">This protein is involved in the repair of mismatches in DNA. It is possible that it carries out the mismatch recognition step. This protein has a weak ATPase activity.</text>
</comment>
<comment type="similarity">
    <text evidence="1">Belongs to the DNA mismatch repair MutS family.</text>
</comment>
<accession>C3LS25</accession>